<comment type="function">
    <text evidence="4 7">Essential component of the U1 snRNP particle, which recognizes and binds the 5'-splice site of pre-mRNA. Together with other non-snRNP factors, U1 snRNP forms the spliceosomal commitment complex, that targets pre-mRNA to the splicing pathway. U1 snRNP is cotranscriptionally recruited to intron-containing genes. Required for U1 snRNP biogenesis.</text>
</comment>
<comment type="subunit">
    <text evidence="2 3 8">Component of the 18S U1 snRNP particle, a subcomplex of the spliceosome.</text>
</comment>
<comment type="subcellular location">
    <subcellularLocation>
        <location evidence="5">Nucleus</location>
    </subcellularLocation>
</comment>
<comment type="miscellaneous">
    <text evidence="6">Present with 1730 molecules/cell in log phase SD medium.</text>
</comment>
<name>PRP42_YEAST</name>
<dbReference type="EMBL" id="AF020682">
    <property type="protein sequence ID" value="AAB81948.1"/>
    <property type="molecule type" value="Genomic_DNA"/>
</dbReference>
<dbReference type="EMBL" id="Z49701">
    <property type="protein sequence ID" value="CAA89721.1"/>
    <property type="molecule type" value="Genomic_DNA"/>
</dbReference>
<dbReference type="EMBL" id="BK006938">
    <property type="protein sequence ID" value="DAA12076.1"/>
    <property type="molecule type" value="Genomic_DNA"/>
</dbReference>
<dbReference type="PIR" id="S54531">
    <property type="entry name" value="S54531"/>
</dbReference>
<dbReference type="RefSeq" id="NP_010521.1">
    <property type="nucleotide sequence ID" value="NM_001180543.1"/>
</dbReference>
<dbReference type="PDB" id="5ZWN">
    <property type="method" value="EM"/>
    <property type="resolution" value="3.30 A"/>
    <property type="chains" value="T=1-544"/>
</dbReference>
<dbReference type="PDB" id="6G90">
    <property type="method" value="EM"/>
    <property type="resolution" value="4.00 A"/>
    <property type="chains" value="E=1-544"/>
</dbReference>
<dbReference type="PDB" id="6N7P">
    <property type="method" value="EM"/>
    <property type="resolution" value="3.60 A"/>
    <property type="chains" value="D=1-544"/>
</dbReference>
<dbReference type="PDB" id="6N7R">
    <property type="method" value="EM"/>
    <property type="resolution" value="3.20 A"/>
    <property type="chains" value="D=1-544"/>
</dbReference>
<dbReference type="PDB" id="6N7X">
    <property type="method" value="EM"/>
    <property type="resolution" value="3.60 A"/>
    <property type="chains" value="D=1-544"/>
</dbReference>
<dbReference type="PDB" id="7OQC">
    <property type="method" value="EM"/>
    <property type="resolution" value="4.10 A"/>
    <property type="chains" value="E=1-544"/>
</dbReference>
<dbReference type="PDB" id="7OQE">
    <property type="method" value="EM"/>
    <property type="resolution" value="5.90 A"/>
    <property type="chains" value="E=1-544"/>
</dbReference>
<dbReference type="PDB" id="8W2O">
    <property type="method" value="EM"/>
    <property type="resolution" value="3.49 A"/>
    <property type="chains" value="D=1-544"/>
</dbReference>
<dbReference type="PDBsum" id="5ZWN"/>
<dbReference type="PDBsum" id="6G90"/>
<dbReference type="PDBsum" id="6N7P"/>
<dbReference type="PDBsum" id="6N7R"/>
<dbReference type="PDBsum" id="6N7X"/>
<dbReference type="PDBsum" id="7OQC"/>
<dbReference type="PDBsum" id="7OQE"/>
<dbReference type="PDBsum" id="8W2O"/>
<dbReference type="EMDB" id="EMD-0360"/>
<dbReference type="EMDB" id="EMD-0361"/>
<dbReference type="EMDB" id="EMD-13029"/>
<dbReference type="EMDB" id="EMD-13033"/>
<dbReference type="EMDB" id="EMD-4364"/>
<dbReference type="EMDB" id="EMD-43753"/>
<dbReference type="EMDB" id="EMD-6973"/>
<dbReference type="EMDB" id="EMD-8622"/>
<dbReference type="SMR" id="Q03776"/>
<dbReference type="BioGRID" id="32286">
    <property type="interactions" value="95"/>
</dbReference>
<dbReference type="ComplexPortal" id="CPX-23">
    <property type="entry name" value="U1 small nuclear ribonucleoprotein complex"/>
</dbReference>
<dbReference type="DIP" id="DIP-2836N"/>
<dbReference type="FunCoup" id="Q03776">
    <property type="interactions" value="393"/>
</dbReference>
<dbReference type="IntAct" id="Q03776">
    <property type="interactions" value="28"/>
</dbReference>
<dbReference type="MINT" id="Q03776"/>
<dbReference type="STRING" id="4932.YDR235W"/>
<dbReference type="iPTMnet" id="Q03776"/>
<dbReference type="PaxDb" id="4932-YDR235W"/>
<dbReference type="PeptideAtlas" id="Q03776"/>
<dbReference type="EnsemblFungi" id="YDR235W_mRNA">
    <property type="protein sequence ID" value="YDR235W"/>
    <property type="gene ID" value="YDR235W"/>
</dbReference>
<dbReference type="GeneID" id="851821"/>
<dbReference type="KEGG" id="sce:YDR235W"/>
<dbReference type="AGR" id="SGD:S000002643"/>
<dbReference type="SGD" id="S000002643">
    <property type="gene designation" value="PRP42"/>
</dbReference>
<dbReference type="VEuPathDB" id="FungiDB:YDR235W"/>
<dbReference type="eggNOG" id="KOG1258">
    <property type="taxonomic scope" value="Eukaryota"/>
</dbReference>
<dbReference type="HOGENOM" id="CLU_037892_0_0_1"/>
<dbReference type="InParanoid" id="Q03776"/>
<dbReference type="OMA" id="IELWISY"/>
<dbReference type="OrthoDB" id="10265668at2759"/>
<dbReference type="BioCyc" id="YEAST:G3O-29811-MONOMER"/>
<dbReference type="BioGRID-ORCS" id="851821">
    <property type="hits" value="0 hits in 10 CRISPR screens"/>
</dbReference>
<dbReference type="PRO" id="PR:Q03776"/>
<dbReference type="Proteomes" id="UP000002311">
    <property type="component" value="Chromosome IV"/>
</dbReference>
<dbReference type="RNAct" id="Q03776">
    <property type="molecule type" value="protein"/>
</dbReference>
<dbReference type="GO" id="GO:0000243">
    <property type="term" value="C:commitment complex"/>
    <property type="evidence" value="ECO:0000318"/>
    <property type="project" value="GO_Central"/>
</dbReference>
<dbReference type="GO" id="GO:0005634">
    <property type="term" value="C:nucleus"/>
    <property type="evidence" value="ECO:0000303"/>
    <property type="project" value="ComplexPortal"/>
</dbReference>
<dbReference type="GO" id="GO:0005681">
    <property type="term" value="C:spliceosomal complex"/>
    <property type="evidence" value="ECO:0000303"/>
    <property type="project" value="ComplexPortal"/>
</dbReference>
<dbReference type="GO" id="GO:0005685">
    <property type="term" value="C:U1 snRNP"/>
    <property type="evidence" value="ECO:0000314"/>
    <property type="project" value="SGD"/>
</dbReference>
<dbReference type="GO" id="GO:0071004">
    <property type="term" value="C:U2-type prespliceosome"/>
    <property type="evidence" value="ECO:0000314"/>
    <property type="project" value="SGD"/>
</dbReference>
<dbReference type="GO" id="GO:0003723">
    <property type="term" value="F:RNA binding"/>
    <property type="evidence" value="ECO:0000314"/>
    <property type="project" value="SGD"/>
</dbReference>
<dbReference type="GO" id="GO:0000395">
    <property type="term" value="P:mRNA 5'-splice site recognition"/>
    <property type="evidence" value="ECO:0000318"/>
    <property type="project" value="GO_Central"/>
</dbReference>
<dbReference type="GO" id="GO:0000398">
    <property type="term" value="P:mRNA splicing, via spliceosome"/>
    <property type="evidence" value="ECO:0000315"/>
    <property type="project" value="SGD"/>
</dbReference>
<dbReference type="FunFam" id="1.25.40.10:FF:000870">
    <property type="entry name" value="U1 snRNP protein"/>
    <property type="match status" value="1"/>
</dbReference>
<dbReference type="Gene3D" id="1.25.40.10">
    <property type="entry name" value="Tetratricopeptide repeat domain"/>
    <property type="match status" value="2"/>
</dbReference>
<dbReference type="InterPro" id="IPR003107">
    <property type="entry name" value="HAT"/>
</dbReference>
<dbReference type="InterPro" id="IPR011990">
    <property type="entry name" value="TPR-like_helical_dom_sf"/>
</dbReference>
<dbReference type="PANTHER" id="PTHR17204">
    <property type="entry name" value="PRE-MRNA PROCESSING PROTEIN PRP39-RELATED"/>
    <property type="match status" value="1"/>
</dbReference>
<dbReference type="PANTHER" id="PTHR17204:SF23">
    <property type="entry name" value="U1 SMALL NUCLEAR RIBONUCLEOPROTEIN COMPONENT PRP42"/>
    <property type="match status" value="1"/>
</dbReference>
<dbReference type="Pfam" id="PF23241">
    <property type="entry name" value="HAT_PRP39_C"/>
    <property type="match status" value="1"/>
</dbReference>
<dbReference type="Pfam" id="PF23240">
    <property type="entry name" value="HAT_PRP39_N"/>
    <property type="match status" value="1"/>
</dbReference>
<dbReference type="SMART" id="SM00386">
    <property type="entry name" value="HAT"/>
    <property type="match status" value="3"/>
</dbReference>
<dbReference type="SUPFAM" id="SSF48452">
    <property type="entry name" value="TPR-like"/>
    <property type="match status" value="1"/>
</dbReference>
<organism>
    <name type="scientific">Saccharomyces cerevisiae (strain ATCC 204508 / S288c)</name>
    <name type="common">Baker's yeast</name>
    <dbReference type="NCBI Taxonomy" id="559292"/>
    <lineage>
        <taxon>Eukaryota</taxon>
        <taxon>Fungi</taxon>
        <taxon>Dikarya</taxon>
        <taxon>Ascomycota</taxon>
        <taxon>Saccharomycotina</taxon>
        <taxon>Saccharomycetes</taxon>
        <taxon>Saccharomycetales</taxon>
        <taxon>Saccharomycetaceae</taxon>
        <taxon>Saccharomyces</taxon>
    </lineage>
</organism>
<evidence type="ECO:0000255" key="1"/>
<evidence type="ECO:0000269" key="2">
    <source>
    </source>
</evidence>
<evidence type="ECO:0000269" key="3">
    <source>
    </source>
</evidence>
<evidence type="ECO:0000269" key="4">
    <source>
    </source>
</evidence>
<evidence type="ECO:0000269" key="5">
    <source>
    </source>
</evidence>
<evidence type="ECO:0000269" key="6">
    <source>
    </source>
</evidence>
<evidence type="ECO:0000269" key="7">
    <source>
    </source>
</evidence>
<evidence type="ECO:0000269" key="8">
    <source>
    </source>
</evidence>
<evidence type="ECO:0007829" key="9">
    <source>
        <dbReference type="PDB" id="5ZWN"/>
    </source>
</evidence>
<evidence type="ECO:0007829" key="10">
    <source>
        <dbReference type="PDB" id="6N7R"/>
    </source>
</evidence>
<accession>Q03776</accession>
<accession>D6VSL6</accession>
<proteinExistence type="evidence at protein level"/>
<sequence length="544" mass="65145">MDKYTALIHDENFSTLTLNVSRYPKSLAYWEKLLNYIVKASAPICKSTEPQLLKLIRCTYSSMLNEFPYLENYYIDFALLEYKLGNVSMSHKIFQRGLQAFNQRSLLLWTSYLKFCNNVISHQKQLFKKYETAEEYVGLHFFSGEFWDLYLEQISSRCTSSKKYWNVLRKILEIPLHSFSKFYALWLQRIDDIMDLKQLSQLTSKDELLKKLKIDINYSGRKGPYLQDAKKKLKKITKEMYMVVQYQVLEIYSIFESKIYINYYTSPETLVSSDEIETWIKYLDYTITLQTDSLTHLNFQRALLPLAHYDLVWIKYSKWLINSKNDLLGAKNVLLMGLKFSLKKTEIIKLLYSVICKLNEYVLLRNLLEKIESSYSDNVENVDDFEIFWDYLQFKTFCQNSLYSSRYSDSQSNGLLNKELFDKVWKRLSCKEKKSGQEILLNNLVQFYSKDTVEFVEKNIFQKIIEFGWEYYLQNGMFWNCYCRLIYFDTSRSYLDKRQYIVRKIWPQIDKKFAQSVLPSLTEFCESYFPEEMDTLEEMFTEEP</sequence>
<gene>
    <name type="primary">PRP42</name>
    <name type="synonym">MUD16</name>
    <name type="synonym">SNU65</name>
    <name type="ordered locus">YDR235W</name>
    <name type="ORF">YD8419.02</name>
</gene>
<reference key="1">
    <citation type="journal article" date="1998" name="Mol. Cell. Biol.">
        <title>Yeast pre-mRNA splicing requires a pair of U1 snRNP-associated tetratricopeptide repeat proteins.</title>
        <authorList>
            <person name="McLean M.R."/>
            <person name="Rymond B.C."/>
        </authorList>
    </citation>
    <scope>NUCLEOTIDE SEQUENCE [GENOMIC DNA]</scope>
    <scope>FUNCTION</scope>
    <source>
        <strain>ATCC 204511 / S288c / AB972</strain>
    </source>
</reference>
<reference key="2">
    <citation type="journal article" date="1997" name="Nature">
        <title>The nucleotide sequence of Saccharomyces cerevisiae chromosome IV.</title>
        <authorList>
            <person name="Jacq C."/>
            <person name="Alt-Moerbe J."/>
            <person name="Andre B."/>
            <person name="Arnold W."/>
            <person name="Bahr A."/>
            <person name="Ballesta J.P.G."/>
            <person name="Bargues M."/>
            <person name="Baron L."/>
            <person name="Becker A."/>
            <person name="Biteau N."/>
            <person name="Bloecker H."/>
            <person name="Blugeon C."/>
            <person name="Boskovic J."/>
            <person name="Brandt P."/>
            <person name="Brueckner M."/>
            <person name="Buitrago M.J."/>
            <person name="Coster F."/>
            <person name="Delaveau T."/>
            <person name="del Rey F."/>
            <person name="Dujon B."/>
            <person name="Eide L.G."/>
            <person name="Garcia-Cantalejo J.M."/>
            <person name="Goffeau A."/>
            <person name="Gomez-Peris A."/>
            <person name="Granotier C."/>
            <person name="Hanemann V."/>
            <person name="Hankeln T."/>
            <person name="Hoheisel J.D."/>
            <person name="Jaeger W."/>
            <person name="Jimenez A."/>
            <person name="Jonniaux J.-L."/>
            <person name="Kraemer C."/>
            <person name="Kuester H."/>
            <person name="Laamanen P."/>
            <person name="Legros Y."/>
            <person name="Louis E.J."/>
            <person name="Moeller-Rieker S."/>
            <person name="Monnet A."/>
            <person name="Moro M."/>
            <person name="Mueller-Auer S."/>
            <person name="Nussbaumer B."/>
            <person name="Paricio N."/>
            <person name="Paulin L."/>
            <person name="Perea J."/>
            <person name="Perez-Alonso M."/>
            <person name="Perez-Ortin J.E."/>
            <person name="Pohl T.M."/>
            <person name="Prydz H."/>
            <person name="Purnelle B."/>
            <person name="Rasmussen S.W."/>
            <person name="Remacha M.A."/>
            <person name="Revuelta J.L."/>
            <person name="Rieger M."/>
            <person name="Salom D."/>
            <person name="Saluz H.P."/>
            <person name="Saiz J.E."/>
            <person name="Saren A.-M."/>
            <person name="Schaefer M."/>
            <person name="Scharfe M."/>
            <person name="Schmidt E.R."/>
            <person name="Schneider C."/>
            <person name="Scholler P."/>
            <person name="Schwarz S."/>
            <person name="Soler-Mira A."/>
            <person name="Urrestarazu L.A."/>
            <person name="Verhasselt P."/>
            <person name="Vissers S."/>
            <person name="Voet M."/>
            <person name="Volckaert G."/>
            <person name="Wagner G."/>
            <person name="Wambutt R."/>
            <person name="Wedler E."/>
            <person name="Wedler H."/>
            <person name="Woelfl S."/>
            <person name="Harris D.E."/>
            <person name="Bowman S."/>
            <person name="Brown D."/>
            <person name="Churcher C.M."/>
            <person name="Connor R."/>
            <person name="Dedman K."/>
            <person name="Gentles S."/>
            <person name="Hamlin N."/>
            <person name="Hunt S."/>
            <person name="Jones L."/>
            <person name="McDonald S."/>
            <person name="Murphy L.D."/>
            <person name="Niblett D."/>
            <person name="Odell C."/>
            <person name="Oliver K."/>
            <person name="Rajandream M.A."/>
            <person name="Richards C."/>
            <person name="Shore L."/>
            <person name="Walsh S.V."/>
            <person name="Barrell B.G."/>
            <person name="Dietrich F.S."/>
            <person name="Mulligan J.T."/>
            <person name="Allen E."/>
            <person name="Araujo R."/>
            <person name="Aviles E."/>
            <person name="Berno A."/>
            <person name="Carpenter J."/>
            <person name="Chen E."/>
            <person name="Cherry J.M."/>
            <person name="Chung E."/>
            <person name="Duncan M."/>
            <person name="Hunicke-Smith S."/>
            <person name="Hyman R.W."/>
            <person name="Komp C."/>
            <person name="Lashkari D."/>
            <person name="Lew H."/>
            <person name="Lin D."/>
            <person name="Mosedale D."/>
            <person name="Nakahara K."/>
            <person name="Namath A."/>
            <person name="Oefner P."/>
            <person name="Oh C."/>
            <person name="Petel F.X."/>
            <person name="Roberts D."/>
            <person name="Schramm S."/>
            <person name="Schroeder M."/>
            <person name="Shogren T."/>
            <person name="Shroff N."/>
            <person name="Winant A."/>
            <person name="Yelton M.A."/>
            <person name="Botstein D."/>
            <person name="Davis R.W."/>
            <person name="Johnston M."/>
            <person name="Andrews S."/>
            <person name="Brinkman R."/>
            <person name="Cooper J."/>
            <person name="Ding H."/>
            <person name="Du Z."/>
            <person name="Favello A."/>
            <person name="Fulton L."/>
            <person name="Gattung S."/>
            <person name="Greco T."/>
            <person name="Hallsworth K."/>
            <person name="Hawkins J."/>
            <person name="Hillier L.W."/>
            <person name="Jier M."/>
            <person name="Johnson D."/>
            <person name="Johnston L."/>
            <person name="Kirsten J."/>
            <person name="Kucaba T."/>
            <person name="Langston Y."/>
            <person name="Latreille P."/>
            <person name="Le T."/>
            <person name="Mardis E."/>
            <person name="Menezes S."/>
            <person name="Miller N."/>
            <person name="Nhan M."/>
            <person name="Pauley A."/>
            <person name="Peluso D."/>
            <person name="Rifkin L."/>
            <person name="Riles L."/>
            <person name="Taich A."/>
            <person name="Trevaskis E."/>
            <person name="Vignati D."/>
            <person name="Wilcox L."/>
            <person name="Wohldman P."/>
            <person name="Vaudin M."/>
            <person name="Wilson R."/>
            <person name="Waterston R."/>
            <person name="Albermann K."/>
            <person name="Hani J."/>
            <person name="Heumann K."/>
            <person name="Kleine K."/>
            <person name="Mewes H.-W."/>
            <person name="Zollner A."/>
            <person name="Zaccaria P."/>
        </authorList>
    </citation>
    <scope>NUCLEOTIDE SEQUENCE [LARGE SCALE GENOMIC DNA]</scope>
    <source>
        <strain>ATCC 204508 / S288c</strain>
    </source>
</reference>
<reference key="3">
    <citation type="journal article" date="2014" name="G3 (Bethesda)">
        <title>The reference genome sequence of Saccharomyces cerevisiae: Then and now.</title>
        <authorList>
            <person name="Engel S.R."/>
            <person name="Dietrich F.S."/>
            <person name="Fisk D.G."/>
            <person name="Binkley G."/>
            <person name="Balakrishnan R."/>
            <person name="Costanzo M.C."/>
            <person name="Dwight S.S."/>
            <person name="Hitz B.C."/>
            <person name="Karra K."/>
            <person name="Nash R.S."/>
            <person name="Weng S."/>
            <person name="Wong E.D."/>
            <person name="Lloyd P."/>
            <person name="Skrzypek M.S."/>
            <person name="Miyasato S.R."/>
            <person name="Simison M."/>
            <person name="Cherry J.M."/>
        </authorList>
    </citation>
    <scope>GENOME REANNOTATION</scope>
    <source>
        <strain>ATCC 204508 / S288c</strain>
    </source>
</reference>
<reference key="4">
    <citation type="journal article" date="1998" name="RNA">
        <title>A comprehensive biochemical and genetic analysis of the yeast U1 snRNP reveals five novel proteins.</title>
        <authorList>
            <person name="Gottschalk A."/>
            <person name="Tang J."/>
            <person name="Puig O."/>
            <person name="Salgado J."/>
            <person name="Neubauer G."/>
            <person name="Colot H.V."/>
            <person name="Mann M."/>
            <person name="Seraphin B."/>
            <person name="Rosbash M."/>
            <person name="Luehrmann R."/>
            <person name="Fabrizio P."/>
        </authorList>
    </citation>
    <scope>IDENTIFICATION IN U1 SNRNP COMPLEX</scope>
</reference>
<reference key="5">
    <citation type="journal article" date="1999" name="Nat. Biotechnol.">
        <title>A generic protein purification method for protein complex characterization and proteome exploration.</title>
        <authorList>
            <person name="Rigaut G."/>
            <person name="Shevchenko A."/>
            <person name="Rutz B."/>
            <person name="Wilm M."/>
            <person name="Mann M."/>
            <person name="Seraphin B."/>
        </authorList>
    </citation>
    <scope>IDENTIFICATION IN U1 SNRNP COMPLEX</scope>
    <scope>IDENTIFICATION BY MASS SPECTROMETRY</scope>
</reference>
<reference key="6">
    <citation type="journal article" date="2002" name="Mol. Cell">
        <title>Composition and functional characterization of the yeast spliceosomal penta-snRNP.</title>
        <authorList>
            <person name="Stevens S.W."/>
            <person name="Ryan D.E."/>
            <person name="Ge H.Y."/>
            <person name="Moore R.E."/>
            <person name="Young M.K."/>
            <person name="Lee T.D."/>
            <person name="Abelson J."/>
        </authorList>
    </citation>
    <scope>IDENTIFICATION IN U1.U2.U4/U6.U5 PENTA-SNRNP COMPLEX</scope>
    <scope>IDENTIFICATION BY MASS SPECTROMETRY</scope>
</reference>
<reference key="7">
    <citation type="journal article" date="2003" name="Mol. Cell. Biol.">
        <title>Cotranscriptional recruitment of the U1 snRNP to intron-containing genes in yeast.</title>
        <authorList>
            <person name="Kotovic K.M."/>
            <person name="Lockshon D."/>
            <person name="Boric L."/>
            <person name="Neugebauer K.M."/>
        </authorList>
    </citation>
    <scope>FUNCTION</scope>
</reference>
<reference key="8">
    <citation type="journal article" date="2003" name="Nature">
        <title>Global analysis of protein localization in budding yeast.</title>
        <authorList>
            <person name="Huh W.-K."/>
            <person name="Falvo J.V."/>
            <person name="Gerke L.C."/>
            <person name="Carroll A.S."/>
            <person name="Howson R.W."/>
            <person name="Weissman J.S."/>
            <person name="O'Shea E.K."/>
        </authorList>
    </citation>
    <scope>SUBCELLULAR LOCATION [LARGE SCALE ANALYSIS]</scope>
</reference>
<reference key="9">
    <citation type="journal article" date="2003" name="Nature">
        <title>Global analysis of protein expression in yeast.</title>
        <authorList>
            <person name="Ghaemmaghami S."/>
            <person name="Huh W.-K."/>
            <person name="Bower K."/>
            <person name="Howson R.W."/>
            <person name="Belle A."/>
            <person name="Dephoure N."/>
            <person name="O'Shea E.K."/>
            <person name="Weissman J.S."/>
        </authorList>
    </citation>
    <scope>LEVEL OF PROTEIN EXPRESSION [LARGE SCALE ANALYSIS]</scope>
</reference>
<feature type="chain" id="PRO_0000262751" description="U1 small nuclear ribonucleoprotein component PRP42">
    <location>
        <begin position="1"/>
        <end position="544"/>
    </location>
</feature>
<feature type="repeat" description="HAT 1">
    <location>
        <begin position="7"/>
        <end position="39"/>
    </location>
</feature>
<feature type="repeat" description="HAT 2">
    <location>
        <begin position="51"/>
        <end position="83"/>
    </location>
</feature>
<feature type="repeat" description="HAT 3">
    <location>
        <begin position="85"/>
        <end position="118"/>
    </location>
</feature>
<feature type="repeat" description="HAT 4">
    <location>
        <begin position="121"/>
        <end position="156"/>
    </location>
</feature>
<feature type="repeat" description="HAT 5">
    <location>
        <begin position="163"/>
        <end position="195"/>
    </location>
</feature>
<feature type="repeat" description="HAT 6">
    <location>
        <begin position="255"/>
        <end position="288"/>
    </location>
</feature>
<feature type="repeat" description="HAT 7">
    <location>
        <begin position="290"/>
        <end position="322"/>
    </location>
</feature>
<feature type="repeat" description="HAT 8">
    <location>
        <begin position="366"/>
        <end position="397"/>
    </location>
</feature>
<feature type="repeat" description="HAT 9">
    <location>
        <begin position="456"/>
        <end position="488"/>
    </location>
</feature>
<feature type="short sequence motif" description="Nuclear localization signal" evidence="1">
    <location>
        <begin position="230"/>
        <end position="235"/>
    </location>
</feature>
<feature type="helix" evidence="10">
    <location>
        <begin position="3"/>
        <end position="8"/>
    </location>
</feature>
<feature type="helix" evidence="10">
    <location>
        <begin position="11"/>
        <end position="22"/>
    </location>
</feature>
<feature type="helix" evidence="9">
    <location>
        <begin position="24"/>
        <end position="26"/>
    </location>
</feature>
<feature type="helix" evidence="10">
    <location>
        <begin position="28"/>
        <end position="39"/>
    </location>
</feature>
<feature type="strand" evidence="10">
    <location>
        <begin position="41"/>
        <end position="43"/>
    </location>
</feature>
<feature type="helix" evidence="10">
    <location>
        <begin position="50"/>
        <end position="66"/>
    </location>
</feature>
<feature type="helix" evidence="10">
    <location>
        <begin position="71"/>
        <end position="83"/>
    </location>
</feature>
<feature type="helix" evidence="10">
    <location>
        <begin position="87"/>
        <end position="100"/>
    </location>
</feature>
<feature type="turn" evidence="10">
    <location>
        <begin position="101"/>
        <end position="103"/>
    </location>
</feature>
<feature type="helix" evidence="10">
    <location>
        <begin position="106"/>
        <end position="119"/>
    </location>
</feature>
<feature type="helix" evidence="10">
    <location>
        <begin position="123"/>
        <end position="137"/>
    </location>
</feature>
<feature type="turn" evidence="10">
    <location>
        <begin position="141"/>
        <end position="143"/>
    </location>
</feature>
<feature type="helix" evidence="10">
    <location>
        <begin position="144"/>
        <end position="157"/>
    </location>
</feature>
<feature type="strand" evidence="10">
    <location>
        <begin position="159"/>
        <end position="161"/>
    </location>
</feature>
<feature type="helix" evidence="10">
    <location>
        <begin position="162"/>
        <end position="171"/>
    </location>
</feature>
<feature type="helix" evidence="10">
    <location>
        <begin position="179"/>
        <end position="191"/>
    </location>
</feature>
<feature type="helix" evidence="10">
    <location>
        <begin position="199"/>
        <end position="202"/>
    </location>
</feature>
<feature type="helix" evidence="10">
    <location>
        <begin position="205"/>
        <end position="210"/>
    </location>
</feature>
<feature type="helix" evidence="10">
    <location>
        <begin position="223"/>
        <end position="254"/>
    </location>
</feature>
<feature type="turn" evidence="10">
    <location>
        <begin position="255"/>
        <end position="258"/>
    </location>
</feature>
<feature type="helix" evidence="10">
    <location>
        <begin position="273"/>
        <end position="289"/>
    </location>
</feature>
<feature type="helix" evidence="10">
    <location>
        <begin position="292"/>
        <end position="302"/>
    </location>
</feature>
<feature type="turn" evidence="10">
    <location>
        <begin position="303"/>
        <end position="308"/>
    </location>
</feature>
<feature type="helix" evidence="10">
    <location>
        <begin position="311"/>
        <end position="322"/>
    </location>
</feature>
<feature type="helix" evidence="10">
    <location>
        <begin position="327"/>
        <end position="340"/>
    </location>
</feature>
<feature type="helix" evidence="10">
    <location>
        <begin position="345"/>
        <end position="357"/>
    </location>
</feature>
<feature type="helix" evidence="10">
    <location>
        <begin position="361"/>
        <end position="374"/>
    </location>
</feature>
<feature type="turn" evidence="9">
    <location>
        <begin position="375"/>
        <end position="377"/>
    </location>
</feature>
<feature type="helix" evidence="10">
    <location>
        <begin position="379"/>
        <end position="381"/>
    </location>
</feature>
<feature type="helix" evidence="10">
    <location>
        <begin position="385"/>
        <end position="402"/>
    </location>
</feature>
<feature type="helix" evidence="10">
    <location>
        <begin position="408"/>
        <end position="410"/>
    </location>
</feature>
<feature type="helix" evidence="10">
    <location>
        <begin position="418"/>
        <end position="428"/>
    </location>
</feature>
<feature type="turn" evidence="10">
    <location>
        <begin position="429"/>
        <end position="432"/>
    </location>
</feature>
<feature type="strand" evidence="10">
    <location>
        <begin position="433"/>
        <end position="435"/>
    </location>
</feature>
<feature type="helix" evidence="10">
    <location>
        <begin position="437"/>
        <end position="444"/>
    </location>
</feature>
<feature type="helix" evidence="10">
    <location>
        <begin position="450"/>
        <end position="459"/>
    </location>
</feature>
<feature type="helix" evidence="10">
    <location>
        <begin position="461"/>
        <end position="467"/>
    </location>
</feature>
<feature type="helix" evidence="10">
    <location>
        <begin position="470"/>
        <end position="473"/>
    </location>
</feature>
<feature type="helix" evidence="10">
    <location>
        <begin position="476"/>
        <end position="487"/>
    </location>
</feature>
<feature type="strand" evidence="10">
    <location>
        <begin position="490"/>
        <end position="492"/>
    </location>
</feature>
<feature type="helix" evidence="10">
    <location>
        <begin position="494"/>
        <end position="503"/>
    </location>
</feature>
<feature type="helix" evidence="10">
    <location>
        <begin position="505"/>
        <end position="508"/>
    </location>
</feature>
<feature type="turn" evidence="9">
    <location>
        <begin position="511"/>
        <end position="513"/>
    </location>
</feature>
<feature type="helix" evidence="10">
    <location>
        <begin position="514"/>
        <end position="528"/>
    </location>
</feature>
<feature type="helix" evidence="10">
    <location>
        <begin position="533"/>
        <end position="539"/>
    </location>
</feature>
<keyword id="KW-0002">3D-structure</keyword>
<keyword id="KW-0507">mRNA processing</keyword>
<keyword id="KW-0508">mRNA splicing</keyword>
<keyword id="KW-0539">Nucleus</keyword>
<keyword id="KW-1185">Reference proteome</keyword>
<keyword id="KW-0677">Repeat</keyword>
<keyword id="KW-0687">Ribonucleoprotein</keyword>
<keyword id="KW-0694">RNA-binding</keyword>
<keyword id="KW-0747">Spliceosome</keyword>
<protein>
    <recommendedName>
        <fullName>U1 small nuclear ribonucleoprotein component PRP42</fullName>
        <shortName>U1 snRNP protein PRP42</shortName>
    </recommendedName>
    <alternativeName>
        <fullName>65 kDa snRNP protein</fullName>
    </alternativeName>
    <alternativeName>
        <fullName>Pre-mRNA-processing factor 42</fullName>
    </alternativeName>
</protein>